<sequence length="232" mass="24354">MKIGIIGAMEEEVTLLRDKIENRQTISLGGCEIYTGQLNGTEVALLKSGIGKVAAALGATLLLEHCKPDVIINTGSAGGLAPTLKVGDIVVSDEARYHDADVTAFGYEYGQLPGCPAGFKADDKLIAAAEACIAELNLNAVRGLIVSGDAFINGSVGLAKIRHNFPQAIAVEMEATAIAHVCHNFNVPFVVVRAISDVADQQSHLSFDEFLAVAAKQSSLMVESLVQKLAHG</sequence>
<accession>B7LGM1</accession>
<proteinExistence type="inferred from homology"/>
<organism>
    <name type="scientific">Escherichia coli (strain 55989 / EAEC)</name>
    <dbReference type="NCBI Taxonomy" id="585055"/>
    <lineage>
        <taxon>Bacteria</taxon>
        <taxon>Pseudomonadati</taxon>
        <taxon>Pseudomonadota</taxon>
        <taxon>Gammaproteobacteria</taxon>
        <taxon>Enterobacterales</taxon>
        <taxon>Enterobacteriaceae</taxon>
        <taxon>Escherichia</taxon>
    </lineage>
</organism>
<evidence type="ECO:0000255" key="1">
    <source>
        <dbReference type="HAMAP-Rule" id="MF_01684"/>
    </source>
</evidence>
<name>MTNN_ECO55</name>
<protein>
    <recommendedName>
        <fullName evidence="1">5'-methylthioadenosine/S-adenosylhomocysteine nucleosidase</fullName>
        <shortName evidence="1">MTA/SAH nucleosidase</shortName>
        <shortName evidence="1">MTAN</shortName>
        <ecNumber evidence="1">3.2.2.9</ecNumber>
    </recommendedName>
    <alternativeName>
        <fullName evidence="1">5'-deoxyadenosine nucleosidase</fullName>
        <shortName evidence="1">DOA nucleosidase</shortName>
        <shortName evidence="1">dAdo nucleosidase</shortName>
    </alternativeName>
    <alternativeName>
        <fullName evidence="1">5'-methylthioadenosine nucleosidase</fullName>
        <shortName evidence="1">MTA nucleosidase</shortName>
    </alternativeName>
    <alternativeName>
        <fullName evidence="1">S-adenosylhomocysteine nucleosidase</fullName>
        <shortName evidence="1">AdoHcy nucleosidase</shortName>
        <shortName evidence="1">SAH nucleosidase</shortName>
        <shortName evidence="1">SRH nucleosidase</shortName>
    </alternativeName>
</protein>
<dbReference type="EC" id="3.2.2.9" evidence="1"/>
<dbReference type="EMBL" id="CU928145">
    <property type="protein sequence ID" value="CAU96040.1"/>
    <property type="molecule type" value="Genomic_DNA"/>
</dbReference>
<dbReference type="RefSeq" id="WP_000689844.1">
    <property type="nucleotide sequence ID" value="NZ_CP028304.1"/>
</dbReference>
<dbReference type="SMR" id="B7LGM1"/>
<dbReference type="GeneID" id="93777267"/>
<dbReference type="KEGG" id="eck:EC55989_0154"/>
<dbReference type="HOGENOM" id="CLU_031248_2_2_6"/>
<dbReference type="UniPathway" id="UPA00904">
    <property type="reaction ID" value="UER00871"/>
</dbReference>
<dbReference type="Proteomes" id="UP000000746">
    <property type="component" value="Chromosome"/>
</dbReference>
<dbReference type="GO" id="GO:0005829">
    <property type="term" value="C:cytosol"/>
    <property type="evidence" value="ECO:0007669"/>
    <property type="project" value="TreeGrafter"/>
</dbReference>
<dbReference type="GO" id="GO:0008782">
    <property type="term" value="F:adenosylhomocysteine nucleosidase activity"/>
    <property type="evidence" value="ECO:0007669"/>
    <property type="project" value="UniProtKB-UniRule"/>
</dbReference>
<dbReference type="GO" id="GO:0008930">
    <property type="term" value="F:methylthioadenosine nucleosidase activity"/>
    <property type="evidence" value="ECO:0007669"/>
    <property type="project" value="UniProtKB-UniRule"/>
</dbReference>
<dbReference type="GO" id="GO:0019509">
    <property type="term" value="P:L-methionine salvage from methylthioadenosine"/>
    <property type="evidence" value="ECO:0007669"/>
    <property type="project" value="UniProtKB-UniRule"/>
</dbReference>
<dbReference type="GO" id="GO:0019284">
    <property type="term" value="P:L-methionine salvage from S-adenosylmethionine"/>
    <property type="evidence" value="ECO:0007669"/>
    <property type="project" value="TreeGrafter"/>
</dbReference>
<dbReference type="GO" id="GO:0046124">
    <property type="term" value="P:purine deoxyribonucleoside catabolic process"/>
    <property type="evidence" value="ECO:0007669"/>
    <property type="project" value="UniProtKB-UniRule"/>
</dbReference>
<dbReference type="CDD" id="cd09008">
    <property type="entry name" value="MTAN"/>
    <property type="match status" value="1"/>
</dbReference>
<dbReference type="FunFam" id="3.40.50.1580:FF:000001">
    <property type="entry name" value="MTA/SAH nucleosidase family protein"/>
    <property type="match status" value="1"/>
</dbReference>
<dbReference type="Gene3D" id="3.40.50.1580">
    <property type="entry name" value="Nucleoside phosphorylase domain"/>
    <property type="match status" value="1"/>
</dbReference>
<dbReference type="HAMAP" id="MF_01684">
    <property type="entry name" value="Salvage_MtnN"/>
    <property type="match status" value="1"/>
</dbReference>
<dbReference type="InterPro" id="IPR010049">
    <property type="entry name" value="MTA_SAH_Nsdase"/>
</dbReference>
<dbReference type="InterPro" id="IPR000845">
    <property type="entry name" value="Nucleoside_phosphorylase_d"/>
</dbReference>
<dbReference type="InterPro" id="IPR035994">
    <property type="entry name" value="Nucleoside_phosphorylase_sf"/>
</dbReference>
<dbReference type="NCBIfam" id="TIGR01704">
    <property type="entry name" value="MTA_SAH-Nsdase"/>
    <property type="match status" value="1"/>
</dbReference>
<dbReference type="NCBIfam" id="NF004079">
    <property type="entry name" value="PRK05584.1"/>
    <property type="match status" value="1"/>
</dbReference>
<dbReference type="PANTHER" id="PTHR46832">
    <property type="entry name" value="5'-METHYLTHIOADENOSINE/S-ADENOSYLHOMOCYSTEINE NUCLEOSIDASE"/>
    <property type="match status" value="1"/>
</dbReference>
<dbReference type="PANTHER" id="PTHR46832:SF1">
    <property type="entry name" value="5'-METHYLTHIOADENOSINE_S-ADENOSYLHOMOCYSTEINE NUCLEOSIDASE"/>
    <property type="match status" value="1"/>
</dbReference>
<dbReference type="Pfam" id="PF01048">
    <property type="entry name" value="PNP_UDP_1"/>
    <property type="match status" value="1"/>
</dbReference>
<dbReference type="SUPFAM" id="SSF53167">
    <property type="entry name" value="Purine and uridine phosphorylases"/>
    <property type="match status" value="1"/>
</dbReference>
<reference key="1">
    <citation type="journal article" date="2009" name="PLoS Genet.">
        <title>Organised genome dynamics in the Escherichia coli species results in highly diverse adaptive paths.</title>
        <authorList>
            <person name="Touchon M."/>
            <person name="Hoede C."/>
            <person name="Tenaillon O."/>
            <person name="Barbe V."/>
            <person name="Baeriswyl S."/>
            <person name="Bidet P."/>
            <person name="Bingen E."/>
            <person name="Bonacorsi S."/>
            <person name="Bouchier C."/>
            <person name="Bouvet O."/>
            <person name="Calteau A."/>
            <person name="Chiapello H."/>
            <person name="Clermont O."/>
            <person name="Cruveiller S."/>
            <person name="Danchin A."/>
            <person name="Diard M."/>
            <person name="Dossat C."/>
            <person name="Karoui M.E."/>
            <person name="Frapy E."/>
            <person name="Garry L."/>
            <person name="Ghigo J.M."/>
            <person name="Gilles A.M."/>
            <person name="Johnson J."/>
            <person name="Le Bouguenec C."/>
            <person name="Lescat M."/>
            <person name="Mangenot S."/>
            <person name="Martinez-Jehanne V."/>
            <person name="Matic I."/>
            <person name="Nassif X."/>
            <person name="Oztas S."/>
            <person name="Petit M.A."/>
            <person name="Pichon C."/>
            <person name="Rouy Z."/>
            <person name="Ruf C.S."/>
            <person name="Schneider D."/>
            <person name="Tourret J."/>
            <person name="Vacherie B."/>
            <person name="Vallenet D."/>
            <person name="Medigue C."/>
            <person name="Rocha E.P.C."/>
            <person name="Denamur E."/>
        </authorList>
    </citation>
    <scope>NUCLEOTIDE SEQUENCE [LARGE SCALE GENOMIC DNA]</scope>
    <source>
        <strain>55989 / EAEC</strain>
    </source>
</reference>
<feature type="chain" id="PRO_1000187418" description="5'-methylthioadenosine/S-adenosylhomocysteine nucleosidase">
    <location>
        <begin position="1"/>
        <end position="232"/>
    </location>
</feature>
<feature type="active site" description="Proton acceptor" evidence="1">
    <location>
        <position position="12"/>
    </location>
</feature>
<feature type="active site" description="Proton donor" evidence="1">
    <location>
        <position position="197"/>
    </location>
</feature>
<feature type="binding site" evidence="1">
    <location>
        <position position="78"/>
    </location>
    <ligand>
        <name>substrate</name>
    </ligand>
</feature>
<feature type="binding site" evidence="1">
    <location>
        <position position="152"/>
    </location>
    <ligand>
        <name>substrate</name>
    </ligand>
</feature>
<feature type="binding site" evidence="1">
    <location>
        <begin position="173"/>
        <end position="174"/>
    </location>
    <ligand>
        <name>substrate</name>
    </ligand>
</feature>
<gene>
    <name evidence="1" type="primary">mtnN</name>
    <name type="ordered locus">EC55989_0154</name>
</gene>
<keyword id="KW-0028">Amino-acid biosynthesis</keyword>
<keyword id="KW-0378">Hydrolase</keyword>
<keyword id="KW-0486">Methionine biosynthesis</keyword>
<keyword id="KW-1185">Reference proteome</keyword>
<comment type="function">
    <text evidence="1">Catalyzes the irreversible cleavage of the glycosidic bond in both 5'-methylthioadenosine (MTA) and S-adenosylhomocysteine (SAH/AdoHcy) to adenine and the corresponding thioribose, 5'-methylthioribose and S-ribosylhomocysteine, respectively. Also cleaves 5'-deoxyadenosine, a toxic by-product of radical S-adenosylmethionine (SAM) enzymes, into 5-deoxyribose and adenine. Thus, is required for in vivo function of the radical SAM enzymes biotin synthase and lipoic acid synthase, that are inhibited by 5'-deoxyadenosine accumulation.</text>
</comment>
<comment type="catalytic activity">
    <reaction evidence="1">
        <text>S-adenosyl-L-homocysteine + H2O = S-(5-deoxy-D-ribos-5-yl)-L-homocysteine + adenine</text>
        <dbReference type="Rhea" id="RHEA:17805"/>
        <dbReference type="ChEBI" id="CHEBI:15377"/>
        <dbReference type="ChEBI" id="CHEBI:16708"/>
        <dbReference type="ChEBI" id="CHEBI:57856"/>
        <dbReference type="ChEBI" id="CHEBI:58195"/>
        <dbReference type="EC" id="3.2.2.9"/>
    </reaction>
</comment>
<comment type="catalytic activity">
    <reaction evidence="1">
        <text>S-methyl-5'-thioadenosine + H2O = 5-(methylsulfanyl)-D-ribose + adenine</text>
        <dbReference type="Rhea" id="RHEA:13617"/>
        <dbReference type="ChEBI" id="CHEBI:15377"/>
        <dbReference type="ChEBI" id="CHEBI:16708"/>
        <dbReference type="ChEBI" id="CHEBI:17509"/>
        <dbReference type="ChEBI" id="CHEBI:78440"/>
        <dbReference type="EC" id="3.2.2.9"/>
    </reaction>
</comment>
<comment type="catalytic activity">
    <reaction evidence="1">
        <text>5'-deoxyadenosine + H2O = 5-deoxy-D-ribose + adenine</text>
        <dbReference type="Rhea" id="RHEA:29859"/>
        <dbReference type="ChEBI" id="CHEBI:15377"/>
        <dbReference type="ChEBI" id="CHEBI:16708"/>
        <dbReference type="ChEBI" id="CHEBI:17319"/>
        <dbReference type="ChEBI" id="CHEBI:149540"/>
        <dbReference type="EC" id="3.2.2.9"/>
    </reaction>
    <physiologicalReaction direction="left-to-right" evidence="1">
        <dbReference type="Rhea" id="RHEA:29860"/>
    </physiologicalReaction>
</comment>
<comment type="pathway">
    <text evidence="1">Amino-acid biosynthesis; L-methionine biosynthesis via salvage pathway; S-methyl-5-thio-alpha-D-ribose 1-phosphate from S-methyl-5'-thioadenosine (hydrolase route): step 1/2.</text>
</comment>
<comment type="subunit">
    <text evidence="1">Homodimer.</text>
</comment>
<comment type="similarity">
    <text evidence="1">Belongs to the PNP/UDP phosphorylase family. MtnN subfamily.</text>
</comment>